<organism>
    <name type="scientific">Drosophila melanogaster</name>
    <name type="common">Fruit fly</name>
    <dbReference type="NCBI Taxonomy" id="7227"/>
    <lineage>
        <taxon>Eukaryota</taxon>
        <taxon>Metazoa</taxon>
        <taxon>Ecdysozoa</taxon>
        <taxon>Arthropoda</taxon>
        <taxon>Hexapoda</taxon>
        <taxon>Insecta</taxon>
        <taxon>Pterygota</taxon>
        <taxon>Neoptera</taxon>
        <taxon>Endopterygota</taxon>
        <taxon>Diptera</taxon>
        <taxon>Brachycera</taxon>
        <taxon>Muscomorpha</taxon>
        <taxon>Ephydroidea</taxon>
        <taxon>Drosophilidae</taxon>
        <taxon>Drosophila</taxon>
        <taxon>Sophophora</taxon>
    </lineage>
</organism>
<comment type="function">
    <text evidence="1 3 4">Heme-dependent dioxygenase that catalyzes the oxidative cleavage of the L-tryptophan (L-Trp) pyrrole ring and converts L-tryptophan to N-formyl-L-kynurenine. Catalyzes the oxidative cleavage of the indole moiety (PubMed:23333332). Required during larval growth to control the level of potentially harmful free tryptophan in the hemolymph. In the adult the same reaction is the first step in the ommochrome biosynthetic pathway (PubMed:2108317).</text>
</comment>
<comment type="catalytic activity">
    <reaction evidence="1 3">
        <text>L-tryptophan + O2 = N-formyl-L-kynurenine</text>
        <dbReference type="Rhea" id="RHEA:24536"/>
        <dbReference type="ChEBI" id="CHEBI:15379"/>
        <dbReference type="ChEBI" id="CHEBI:57912"/>
        <dbReference type="ChEBI" id="CHEBI:58629"/>
        <dbReference type="EC" id="1.13.11.11"/>
    </reaction>
</comment>
<comment type="cofactor">
    <cofactor evidence="1 3">
        <name>heme</name>
        <dbReference type="ChEBI" id="CHEBI:30413"/>
    </cofactor>
    <text evidence="1 3">Binds 1 heme group per subunit.</text>
</comment>
<comment type="pathway">
    <text evidence="1 3">Amino-acid degradation; L-tryptophan degradation via kynurenine pathway; L-kynurenine from L-tryptophan: step 1/2.</text>
</comment>
<comment type="pathway">
    <text evidence="1">Pigment biosynthesis; ommochrome biosynthesis.</text>
</comment>
<comment type="subunit">
    <text evidence="1 3">Homotetramer. Dimer of dimers.</text>
</comment>
<comment type="developmental stage">
    <text evidence="2">High in late larvae and in adult.</text>
</comment>
<comment type="similarity">
    <text evidence="1">Belongs to the tryptophan 2,3-dioxygenase family.</text>
</comment>
<feature type="chain" id="PRO_0000065780" description="Tryptophan 2,3-dioxygenase">
    <location>
        <begin position="1"/>
        <end position="379"/>
    </location>
</feature>
<feature type="binding site" evidence="1">
    <location>
        <begin position="57"/>
        <end position="61"/>
    </location>
    <ligand>
        <name>substrate</name>
    </ligand>
</feature>
<feature type="binding site" evidence="1">
    <location>
        <position position="128"/>
    </location>
    <ligand>
        <name>substrate</name>
    </ligand>
</feature>
<feature type="binding site" description="axial binding residue" evidence="1 3 5">
    <location>
        <position position="312"/>
    </location>
    <ligand>
        <name>heme</name>
        <dbReference type="ChEBI" id="CHEBI:30413"/>
    </ligand>
    <ligandPart>
        <name>Fe</name>
        <dbReference type="ChEBI" id="CHEBI:18248"/>
    </ligandPart>
</feature>
<feature type="binding site" evidence="1">
    <location>
        <position position="327"/>
    </location>
    <ligand>
        <name>substrate</name>
    </ligand>
</feature>
<feature type="mutagenesis site" description="Strongly reduced enzyme activity." evidence="3">
    <original>D</original>
    <variation>A</variation>
    <location>
        <position position="123"/>
    </location>
</feature>
<feature type="mutagenesis site" description="Strongly reduced enzyme activity." evidence="3">
    <original>Y</original>
    <variation>F</variation>
    <location>
        <position position="236"/>
    </location>
</feature>
<feature type="mutagenesis site" description="Strongly reduced enzyme activity." evidence="3">
    <original>R</original>
    <variation>A</variation>
    <location>
        <position position="309"/>
    </location>
</feature>
<feature type="mutagenesis site" description="Strongly reduced enzyme activity." evidence="3">
    <original>Y</original>
    <variation>F</variation>
    <location>
        <position position="335"/>
    </location>
</feature>
<feature type="helix" evidence="6">
    <location>
        <begin position="27"/>
        <end position="30"/>
    </location>
</feature>
<feature type="helix" evidence="6">
    <location>
        <begin position="33"/>
        <end position="36"/>
    </location>
</feature>
<feature type="helix" evidence="6">
    <location>
        <begin position="43"/>
        <end position="46"/>
    </location>
</feature>
<feature type="helix" evidence="6">
    <location>
        <begin position="54"/>
        <end position="82"/>
    </location>
</feature>
<feature type="strand" evidence="6">
    <location>
        <begin position="83"/>
        <end position="85"/>
    </location>
</feature>
<feature type="helix" evidence="6">
    <location>
        <begin position="89"/>
        <end position="116"/>
    </location>
</feature>
<feature type="helix" evidence="6">
    <location>
        <begin position="121"/>
        <end position="125"/>
    </location>
</feature>
<feature type="helix" evidence="6">
    <location>
        <begin position="128"/>
        <end position="130"/>
    </location>
</feature>
<feature type="helix" evidence="6">
    <location>
        <begin position="135"/>
        <end position="137"/>
    </location>
</feature>
<feature type="helix" evidence="6">
    <location>
        <begin position="140"/>
        <end position="149"/>
    </location>
</feature>
<feature type="helix" evidence="6">
    <location>
        <begin position="153"/>
        <end position="155"/>
    </location>
</feature>
<feature type="helix" evidence="6">
    <location>
        <begin position="163"/>
        <end position="166"/>
    </location>
</feature>
<feature type="helix" evidence="6">
    <location>
        <begin position="170"/>
        <end position="181"/>
    </location>
</feature>
<feature type="helix" evidence="6">
    <location>
        <begin position="185"/>
        <end position="194"/>
    </location>
</feature>
<feature type="turn" evidence="6">
    <location>
        <begin position="201"/>
        <end position="204"/>
    </location>
</feature>
<feature type="helix" evidence="6">
    <location>
        <begin position="206"/>
        <end position="226"/>
    </location>
</feature>
<feature type="helix" evidence="6">
    <location>
        <begin position="231"/>
        <end position="252"/>
    </location>
</feature>
<feature type="helix" evidence="6">
    <location>
        <begin position="254"/>
        <end position="262"/>
    </location>
</feature>
<feature type="helix" evidence="6">
    <location>
        <begin position="270"/>
        <end position="281"/>
    </location>
</feature>
<feature type="helix" evidence="6">
    <location>
        <begin position="286"/>
        <end position="320"/>
    </location>
</feature>
<feature type="helix" evidence="6">
    <location>
        <begin position="331"/>
        <end position="338"/>
    </location>
</feature>
<feature type="helix" evidence="6">
    <location>
        <begin position="348"/>
        <end position="351"/>
    </location>
</feature>
<feature type="helix" evidence="6">
    <location>
        <begin position="352"/>
        <end position="356"/>
    </location>
</feature>
<feature type="helix" evidence="6">
    <location>
        <begin position="360"/>
        <end position="362"/>
    </location>
</feature>
<reference key="1">
    <citation type="journal article" date="1990" name="Mol. Cell. Biol.">
        <title>Structure and transcription of the Drosophila melanogaster vermilion gene and several mutant alleles.</title>
        <authorList>
            <person name="Searles L.L."/>
            <person name="Ruth R.S."/>
            <person name="Pret A.-M."/>
            <person name="Fridell R.A."/>
            <person name="Ali A.J."/>
        </authorList>
    </citation>
    <scope>NUCLEOTIDE SEQUENCE [GENOMIC DNA]</scope>
    <scope>FUNCTION</scope>
    <scope>DEVELOPMENTAL STAGE</scope>
</reference>
<reference key="2">
    <citation type="journal article" date="2000" name="Science">
        <title>The genome sequence of Drosophila melanogaster.</title>
        <authorList>
            <person name="Adams M.D."/>
            <person name="Celniker S.E."/>
            <person name="Holt R.A."/>
            <person name="Evans C.A."/>
            <person name="Gocayne J.D."/>
            <person name="Amanatides P.G."/>
            <person name="Scherer S.E."/>
            <person name="Li P.W."/>
            <person name="Hoskins R.A."/>
            <person name="Galle R.F."/>
            <person name="George R.A."/>
            <person name="Lewis S.E."/>
            <person name="Richards S."/>
            <person name="Ashburner M."/>
            <person name="Henderson S.N."/>
            <person name="Sutton G.G."/>
            <person name="Wortman J.R."/>
            <person name="Yandell M.D."/>
            <person name="Zhang Q."/>
            <person name="Chen L.X."/>
            <person name="Brandon R.C."/>
            <person name="Rogers Y.-H.C."/>
            <person name="Blazej R.G."/>
            <person name="Champe M."/>
            <person name="Pfeiffer B.D."/>
            <person name="Wan K.H."/>
            <person name="Doyle C."/>
            <person name="Baxter E.G."/>
            <person name="Helt G."/>
            <person name="Nelson C.R."/>
            <person name="Miklos G.L.G."/>
            <person name="Abril J.F."/>
            <person name="Agbayani A."/>
            <person name="An H.-J."/>
            <person name="Andrews-Pfannkoch C."/>
            <person name="Baldwin D."/>
            <person name="Ballew R.M."/>
            <person name="Basu A."/>
            <person name="Baxendale J."/>
            <person name="Bayraktaroglu L."/>
            <person name="Beasley E.M."/>
            <person name="Beeson K.Y."/>
            <person name="Benos P.V."/>
            <person name="Berman B.P."/>
            <person name="Bhandari D."/>
            <person name="Bolshakov S."/>
            <person name="Borkova D."/>
            <person name="Botchan M.R."/>
            <person name="Bouck J."/>
            <person name="Brokstein P."/>
            <person name="Brottier P."/>
            <person name="Burtis K.C."/>
            <person name="Busam D.A."/>
            <person name="Butler H."/>
            <person name="Cadieu E."/>
            <person name="Center A."/>
            <person name="Chandra I."/>
            <person name="Cherry J.M."/>
            <person name="Cawley S."/>
            <person name="Dahlke C."/>
            <person name="Davenport L.B."/>
            <person name="Davies P."/>
            <person name="de Pablos B."/>
            <person name="Delcher A."/>
            <person name="Deng Z."/>
            <person name="Mays A.D."/>
            <person name="Dew I."/>
            <person name="Dietz S.M."/>
            <person name="Dodson K."/>
            <person name="Doup L.E."/>
            <person name="Downes M."/>
            <person name="Dugan-Rocha S."/>
            <person name="Dunkov B.C."/>
            <person name="Dunn P."/>
            <person name="Durbin K.J."/>
            <person name="Evangelista C.C."/>
            <person name="Ferraz C."/>
            <person name="Ferriera S."/>
            <person name="Fleischmann W."/>
            <person name="Fosler C."/>
            <person name="Gabrielian A.E."/>
            <person name="Garg N.S."/>
            <person name="Gelbart W.M."/>
            <person name="Glasser K."/>
            <person name="Glodek A."/>
            <person name="Gong F."/>
            <person name="Gorrell J.H."/>
            <person name="Gu Z."/>
            <person name="Guan P."/>
            <person name="Harris M."/>
            <person name="Harris N.L."/>
            <person name="Harvey D.A."/>
            <person name="Heiman T.J."/>
            <person name="Hernandez J.R."/>
            <person name="Houck J."/>
            <person name="Hostin D."/>
            <person name="Houston K.A."/>
            <person name="Howland T.J."/>
            <person name="Wei M.-H."/>
            <person name="Ibegwam C."/>
            <person name="Jalali M."/>
            <person name="Kalush F."/>
            <person name="Karpen G.H."/>
            <person name="Ke Z."/>
            <person name="Kennison J.A."/>
            <person name="Ketchum K.A."/>
            <person name="Kimmel B.E."/>
            <person name="Kodira C.D."/>
            <person name="Kraft C.L."/>
            <person name="Kravitz S."/>
            <person name="Kulp D."/>
            <person name="Lai Z."/>
            <person name="Lasko P."/>
            <person name="Lei Y."/>
            <person name="Levitsky A.A."/>
            <person name="Li J.H."/>
            <person name="Li Z."/>
            <person name="Liang Y."/>
            <person name="Lin X."/>
            <person name="Liu X."/>
            <person name="Mattei B."/>
            <person name="McIntosh T.C."/>
            <person name="McLeod M.P."/>
            <person name="McPherson D."/>
            <person name="Merkulov G."/>
            <person name="Milshina N.V."/>
            <person name="Mobarry C."/>
            <person name="Morris J."/>
            <person name="Moshrefi A."/>
            <person name="Mount S.M."/>
            <person name="Moy M."/>
            <person name="Murphy B."/>
            <person name="Murphy L."/>
            <person name="Muzny D.M."/>
            <person name="Nelson D.L."/>
            <person name="Nelson D.R."/>
            <person name="Nelson K.A."/>
            <person name="Nixon K."/>
            <person name="Nusskern D.R."/>
            <person name="Pacleb J.M."/>
            <person name="Palazzolo M."/>
            <person name="Pittman G.S."/>
            <person name="Pan S."/>
            <person name="Pollard J."/>
            <person name="Puri V."/>
            <person name="Reese M.G."/>
            <person name="Reinert K."/>
            <person name="Remington K."/>
            <person name="Saunders R.D.C."/>
            <person name="Scheeler F."/>
            <person name="Shen H."/>
            <person name="Shue B.C."/>
            <person name="Siden-Kiamos I."/>
            <person name="Simpson M."/>
            <person name="Skupski M.P."/>
            <person name="Smith T.J."/>
            <person name="Spier E."/>
            <person name="Spradling A.C."/>
            <person name="Stapleton M."/>
            <person name="Strong R."/>
            <person name="Sun E."/>
            <person name="Svirskas R."/>
            <person name="Tector C."/>
            <person name="Turner R."/>
            <person name="Venter E."/>
            <person name="Wang A.H."/>
            <person name="Wang X."/>
            <person name="Wang Z.-Y."/>
            <person name="Wassarman D.A."/>
            <person name="Weinstock G.M."/>
            <person name="Weissenbach J."/>
            <person name="Williams S.M."/>
            <person name="Woodage T."/>
            <person name="Worley K.C."/>
            <person name="Wu D."/>
            <person name="Yang S."/>
            <person name="Yao Q.A."/>
            <person name="Ye J."/>
            <person name="Yeh R.-F."/>
            <person name="Zaveri J.S."/>
            <person name="Zhan M."/>
            <person name="Zhang G."/>
            <person name="Zhao Q."/>
            <person name="Zheng L."/>
            <person name="Zheng X.H."/>
            <person name="Zhong F.N."/>
            <person name="Zhong W."/>
            <person name="Zhou X."/>
            <person name="Zhu S.C."/>
            <person name="Zhu X."/>
            <person name="Smith H.O."/>
            <person name="Gibbs R.A."/>
            <person name="Myers E.W."/>
            <person name="Rubin G.M."/>
            <person name="Venter J.C."/>
        </authorList>
    </citation>
    <scope>NUCLEOTIDE SEQUENCE [LARGE SCALE GENOMIC DNA]</scope>
    <source>
        <strain>Berkeley</strain>
    </source>
</reference>
<reference key="3">
    <citation type="journal article" date="2002" name="Genome Biol.">
        <title>Annotation of the Drosophila melanogaster euchromatic genome: a systematic review.</title>
        <authorList>
            <person name="Misra S."/>
            <person name="Crosby M.A."/>
            <person name="Mungall C.J."/>
            <person name="Matthews B.B."/>
            <person name="Campbell K.S."/>
            <person name="Hradecky P."/>
            <person name="Huang Y."/>
            <person name="Kaminker J.S."/>
            <person name="Millburn G.H."/>
            <person name="Prochnik S.E."/>
            <person name="Smith C.D."/>
            <person name="Tupy J.L."/>
            <person name="Whitfield E.J."/>
            <person name="Bayraktaroglu L."/>
            <person name="Berman B.P."/>
            <person name="Bettencourt B.R."/>
            <person name="Celniker S.E."/>
            <person name="de Grey A.D.N.J."/>
            <person name="Drysdale R.A."/>
            <person name="Harris N.L."/>
            <person name="Richter J."/>
            <person name="Russo S."/>
            <person name="Schroeder A.J."/>
            <person name="Shu S.Q."/>
            <person name="Stapleton M."/>
            <person name="Yamada C."/>
            <person name="Ashburner M."/>
            <person name="Gelbart W.M."/>
            <person name="Rubin G.M."/>
            <person name="Lewis S.E."/>
        </authorList>
    </citation>
    <scope>GENOME REANNOTATION</scope>
    <source>
        <strain>Berkeley</strain>
    </source>
</reference>
<reference key="4">
    <citation type="journal article" date="2002" name="Genome Biol.">
        <title>A Drosophila full-length cDNA resource.</title>
        <authorList>
            <person name="Stapleton M."/>
            <person name="Carlson J.W."/>
            <person name="Brokstein P."/>
            <person name="Yu C."/>
            <person name="Champe M."/>
            <person name="George R.A."/>
            <person name="Guarin H."/>
            <person name="Kronmiller B."/>
            <person name="Pacleb J.M."/>
            <person name="Park S."/>
            <person name="Wan K.H."/>
            <person name="Rubin G.M."/>
            <person name="Celniker S.E."/>
        </authorList>
    </citation>
    <scope>NUCLEOTIDE SEQUENCE [LARGE SCALE MRNA]</scope>
    <source>
        <strain>Berkeley</strain>
        <tissue>Head</tissue>
    </source>
</reference>
<reference evidence="5" key="5">
    <citation type="journal article" date="2013" name="J. Struct. Biol.">
        <title>Crystal structure of Drosophila melanogaster tryptophan 2,3-dioxygenase reveals insights into substrate recognition and catalytic mechanism.</title>
        <authorList>
            <person name="Huang W."/>
            <person name="Gong Z."/>
            <person name="Li J."/>
            <person name="Ding J."/>
        </authorList>
    </citation>
    <scope>X-RAY CRYSTALLOGRAPHY (2.70 ANGSTROMS) OF 24-379 IN COMPLEX WITH HEME</scope>
    <scope>CATALYTIC ACTIVITY</scope>
    <scope>COFACTOR</scope>
    <scope>MUTAGENESIS OF ASP-123; TYR-236; ARG-309 AND TYR-335</scope>
</reference>
<sequence>MSCPYAGNGNDHDDSAVPLTTEVGKIYGEYLMLDKLLDAQCMLSEEDKRPVHDEHLFIITHQAYELWFKQIIFEFDSIRDMLDAEVIDETKTLEIVKRLNRVVLILKLLVDQVPILETMTPLDFMDFRKYLAPASGFQSLQFRLIENKLGVLTEQRVRYNQKYSDVFSDEEARNSIRNSEKDPSLLELVQRWLERTPGLEESGFNFWAKFQESVDRFLEAQVQSAMEEPVEKAKNYRLMDIEKRREVYRSIFDPAVHDALVRRGDRRFSHRALQGAIMITFYRDEPRFSQPHQLLTLLMDIDSLITKWRYNHVIMVQRMIGSQQLGTGGSSGYQYLRSTLSDRYKVFLDLFNLSTFLIPREAIPPLDETIRKKLINKSV</sequence>
<dbReference type="EC" id="1.13.11.11" evidence="1 3"/>
<dbReference type="EMBL" id="M34147">
    <property type="protein sequence ID" value="AAA29014.1"/>
    <property type="molecule type" value="Genomic_DNA"/>
</dbReference>
<dbReference type="EMBL" id="AE014298">
    <property type="protein sequence ID" value="AAF47978.1"/>
    <property type="molecule type" value="Genomic_DNA"/>
</dbReference>
<dbReference type="EMBL" id="AY051478">
    <property type="protein sequence ID" value="AAK92902.1"/>
    <property type="molecule type" value="mRNA"/>
</dbReference>
<dbReference type="PIR" id="A34780">
    <property type="entry name" value="A34780"/>
</dbReference>
<dbReference type="RefSeq" id="NP_511113.1">
    <property type="nucleotide sequence ID" value="NM_078558.3"/>
</dbReference>
<dbReference type="PDB" id="4HKA">
    <property type="method" value="X-ray"/>
    <property type="resolution" value="2.70 A"/>
    <property type="chains" value="A=24-379"/>
</dbReference>
<dbReference type="PDB" id="9ESD">
    <property type="method" value="X-ray"/>
    <property type="resolution" value="2.10 A"/>
    <property type="chains" value="A/B/C/D=23-379"/>
</dbReference>
<dbReference type="PDB" id="9ESF">
    <property type="method" value="X-ray"/>
    <property type="resolution" value="2.50 A"/>
    <property type="chains" value="A/B/C/D=23-379"/>
</dbReference>
<dbReference type="PDB" id="9ETV">
    <property type="method" value="X-ray"/>
    <property type="resolution" value="2.40 A"/>
    <property type="chains" value="A=23-379"/>
</dbReference>
<dbReference type="PDBsum" id="4HKA"/>
<dbReference type="PDBsum" id="9ESD"/>
<dbReference type="PDBsum" id="9ESF"/>
<dbReference type="PDBsum" id="9ETV"/>
<dbReference type="SMR" id="P20351"/>
<dbReference type="BioGRID" id="58442">
    <property type="interactions" value="3"/>
</dbReference>
<dbReference type="FunCoup" id="P20351">
    <property type="interactions" value="162"/>
</dbReference>
<dbReference type="IntAct" id="P20351">
    <property type="interactions" value="1"/>
</dbReference>
<dbReference type="STRING" id="7227.FBpp0073242"/>
<dbReference type="PaxDb" id="7227-FBpp0073242"/>
<dbReference type="DNASU" id="32026"/>
<dbReference type="EnsemblMetazoa" id="FBtr0073386">
    <property type="protein sequence ID" value="FBpp0073242"/>
    <property type="gene ID" value="FBgn0003965"/>
</dbReference>
<dbReference type="GeneID" id="32026"/>
<dbReference type="KEGG" id="dme:Dmel_CG2155"/>
<dbReference type="UCSC" id="CG2155-RA">
    <property type="organism name" value="d. melanogaster"/>
</dbReference>
<dbReference type="AGR" id="FB:FBgn0003965"/>
<dbReference type="CTD" id="32026"/>
<dbReference type="FlyBase" id="FBgn0003965">
    <property type="gene designation" value="v"/>
</dbReference>
<dbReference type="VEuPathDB" id="VectorBase:FBgn0003965"/>
<dbReference type="eggNOG" id="KOG3906">
    <property type="taxonomic scope" value="Eukaryota"/>
</dbReference>
<dbReference type="HOGENOM" id="CLU_045599_1_1_1"/>
<dbReference type="InParanoid" id="P20351"/>
<dbReference type="OMA" id="WRWRNDH"/>
<dbReference type="OrthoDB" id="447477at2759"/>
<dbReference type="PhylomeDB" id="P20351"/>
<dbReference type="BRENDA" id="1.13.11.11">
    <property type="organism ID" value="1994"/>
</dbReference>
<dbReference type="BRENDA" id="1.13.11.52">
    <property type="organism ID" value="1994"/>
</dbReference>
<dbReference type="Reactome" id="R-DME-71240">
    <property type="pathway name" value="Tryptophan catabolism"/>
</dbReference>
<dbReference type="UniPathway" id="UPA00271"/>
<dbReference type="UniPathway" id="UPA00333">
    <property type="reaction ID" value="UER00453"/>
</dbReference>
<dbReference type="BioGRID-ORCS" id="32026">
    <property type="hits" value="0 hits in 1 CRISPR screen"/>
</dbReference>
<dbReference type="EvolutionaryTrace" id="P20351"/>
<dbReference type="GenomeRNAi" id="32026"/>
<dbReference type="PRO" id="PR:P20351"/>
<dbReference type="Proteomes" id="UP000000803">
    <property type="component" value="Chromosome X"/>
</dbReference>
<dbReference type="Bgee" id="FBgn0003965">
    <property type="expression patterns" value="Expressed in fat body cell in Malpighian tubule and 39 other cell types or tissues"/>
</dbReference>
<dbReference type="ExpressionAtlas" id="P20351">
    <property type="expression patterns" value="baseline and differential"/>
</dbReference>
<dbReference type="GO" id="GO:0020037">
    <property type="term" value="F:heme binding"/>
    <property type="evidence" value="ECO:0000314"/>
    <property type="project" value="UniProtKB"/>
</dbReference>
<dbReference type="GO" id="GO:0046872">
    <property type="term" value="F:metal ion binding"/>
    <property type="evidence" value="ECO:0007669"/>
    <property type="project" value="UniProtKB-KW"/>
</dbReference>
<dbReference type="GO" id="GO:0004833">
    <property type="term" value="F:tryptophan 2,3-dioxygenase activity"/>
    <property type="evidence" value="ECO:0000314"/>
    <property type="project" value="UniProtKB"/>
</dbReference>
<dbReference type="GO" id="GO:0048072">
    <property type="term" value="P:compound eye pigmentation"/>
    <property type="evidence" value="ECO:0000304"/>
    <property type="project" value="FlyBase"/>
</dbReference>
<dbReference type="GO" id="GO:0070189">
    <property type="term" value="P:kynurenine metabolic process"/>
    <property type="evidence" value="ECO:0000315"/>
    <property type="project" value="FlyBase"/>
</dbReference>
<dbReference type="GO" id="GO:0006569">
    <property type="term" value="P:L-tryptophan catabolic process"/>
    <property type="evidence" value="ECO:0000304"/>
    <property type="project" value="FlyBase"/>
</dbReference>
<dbReference type="GO" id="GO:0019442">
    <property type="term" value="P:L-tryptophan catabolic process to acetyl-CoA"/>
    <property type="evidence" value="ECO:0000318"/>
    <property type="project" value="GO_Central"/>
</dbReference>
<dbReference type="GO" id="GO:0019441">
    <property type="term" value="P:L-tryptophan catabolic process to kynurenine"/>
    <property type="evidence" value="ECO:0000314"/>
    <property type="project" value="UniProtKB"/>
</dbReference>
<dbReference type="GO" id="GO:0006727">
    <property type="term" value="P:ommochrome biosynthetic process"/>
    <property type="evidence" value="ECO:0007669"/>
    <property type="project" value="UniProtKB-UniRule"/>
</dbReference>
<dbReference type="GO" id="GO:0051289">
    <property type="term" value="P:protein homotetramerization"/>
    <property type="evidence" value="ECO:0000314"/>
    <property type="project" value="UniProtKB"/>
</dbReference>
<dbReference type="FunFam" id="1.10.287.3810:FF:000001">
    <property type="entry name" value="Tryptophan 2,3-dioxygenase"/>
    <property type="match status" value="1"/>
</dbReference>
<dbReference type="Gene3D" id="1.10.287.3810">
    <property type="match status" value="1"/>
</dbReference>
<dbReference type="Gene3D" id="1.20.58.480">
    <property type="match status" value="1"/>
</dbReference>
<dbReference type="HAMAP" id="MF_01972">
    <property type="entry name" value="T23O"/>
    <property type="match status" value="1"/>
</dbReference>
<dbReference type="InterPro" id="IPR037217">
    <property type="entry name" value="Trp/Indoleamine_2_3_dOase-like"/>
</dbReference>
<dbReference type="InterPro" id="IPR004981">
    <property type="entry name" value="Trp_2_3_dOase"/>
</dbReference>
<dbReference type="PANTHER" id="PTHR10138">
    <property type="entry name" value="TRYPTOPHAN 2,3-DIOXYGENASE"/>
    <property type="match status" value="1"/>
</dbReference>
<dbReference type="PANTHER" id="PTHR10138:SF0">
    <property type="entry name" value="TRYPTOPHAN 2,3-DIOXYGENASE"/>
    <property type="match status" value="1"/>
</dbReference>
<dbReference type="Pfam" id="PF03301">
    <property type="entry name" value="Trp_dioxygenase"/>
    <property type="match status" value="1"/>
</dbReference>
<dbReference type="SUPFAM" id="SSF140959">
    <property type="entry name" value="Indolic compounds 2,3-dioxygenase-like"/>
    <property type="match status" value="1"/>
</dbReference>
<evidence type="ECO:0000255" key="1">
    <source>
        <dbReference type="HAMAP-Rule" id="MF_03020"/>
    </source>
</evidence>
<evidence type="ECO:0000269" key="2">
    <source>
    </source>
</evidence>
<evidence type="ECO:0000269" key="3">
    <source>
    </source>
</evidence>
<evidence type="ECO:0000303" key="4">
    <source>
    </source>
</evidence>
<evidence type="ECO:0007744" key="5">
    <source>
        <dbReference type="PDB" id="4HKA"/>
    </source>
</evidence>
<evidence type="ECO:0007829" key="6">
    <source>
        <dbReference type="PDB" id="4HKA"/>
    </source>
</evidence>
<proteinExistence type="evidence at protein level"/>
<name>T23O_DROME</name>
<protein>
    <recommendedName>
        <fullName evidence="1">Tryptophan 2,3-dioxygenase</fullName>
        <shortName evidence="1">TDO</shortName>
        <ecNumber evidence="1 3">1.13.11.11</ecNumber>
    </recommendedName>
    <alternativeName>
        <fullName evidence="1 4">Protein vermilion</fullName>
    </alternativeName>
    <alternativeName>
        <fullName evidence="1">Tryptamin 2,3-dioxygenase</fullName>
    </alternativeName>
    <alternativeName>
        <fullName evidence="1">Tryptophan oxygenase</fullName>
        <shortName evidence="1">TO</shortName>
        <shortName evidence="1">TRPO</shortName>
    </alternativeName>
    <alternativeName>
        <fullName evidence="1">Tryptophan pyrrolase</fullName>
    </alternativeName>
    <alternativeName>
        <fullName evidence="1">Tryptophanase</fullName>
    </alternativeName>
</protein>
<accession>P20351</accession>
<accession>Q9VZ50</accession>
<keyword id="KW-0002">3D-structure</keyword>
<keyword id="KW-0223">Dioxygenase</keyword>
<keyword id="KW-0349">Heme</keyword>
<keyword id="KW-0408">Iron</keyword>
<keyword id="KW-0479">Metal-binding</keyword>
<keyword id="KW-0560">Oxidoreductase</keyword>
<keyword id="KW-1185">Reference proteome</keyword>
<keyword id="KW-0823">Tryptophan catabolism</keyword>
<gene>
    <name evidence="1" type="primary">v</name>
    <name type="ORF">CG5163</name>
</gene>